<dbReference type="EC" id="5.3.1.12" evidence="1"/>
<dbReference type="EMBL" id="AE001437">
    <property type="protein sequence ID" value="AAK78669.1"/>
    <property type="molecule type" value="Genomic_DNA"/>
</dbReference>
<dbReference type="PIR" id="B96985">
    <property type="entry name" value="B96985"/>
</dbReference>
<dbReference type="RefSeq" id="NP_347329.1">
    <property type="nucleotide sequence ID" value="NC_003030.1"/>
</dbReference>
<dbReference type="RefSeq" id="WP_010964011.1">
    <property type="nucleotide sequence ID" value="NC_003030.1"/>
</dbReference>
<dbReference type="SMR" id="Q97L70"/>
<dbReference type="STRING" id="272562.CA_C0692"/>
<dbReference type="GeneID" id="44997203"/>
<dbReference type="KEGG" id="cac:CA_C0692"/>
<dbReference type="PATRIC" id="fig|272562.8.peg.895"/>
<dbReference type="eggNOG" id="COG1904">
    <property type="taxonomic scope" value="Bacteria"/>
</dbReference>
<dbReference type="HOGENOM" id="CLU_044465_1_0_9"/>
<dbReference type="OrthoDB" id="9766564at2"/>
<dbReference type="UniPathway" id="UPA00246"/>
<dbReference type="Proteomes" id="UP000000814">
    <property type="component" value="Chromosome"/>
</dbReference>
<dbReference type="GO" id="GO:0008880">
    <property type="term" value="F:glucuronate isomerase activity"/>
    <property type="evidence" value="ECO:0007669"/>
    <property type="project" value="UniProtKB-UniRule"/>
</dbReference>
<dbReference type="GO" id="GO:0019698">
    <property type="term" value="P:D-galacturonate catabolic process"/>
    <property type="evidence" value="ECO:0007669"/>
    <property type="project" value="TreeGrafter"/>
</dbReference>
<dbReference type="GO" id="GO:0042840">
    <property type="term" value="P:D-glucuronate catabolic process"/>
    <property type="evidence" value="ECO:0007669"/>
    <property type="project" value="TreeGrafter"/>
</dbReference>
<dbReference type="Gene3D" id="3.20.20.140">
    <property type="entry name" value="Metal-dependent hydrolases"/>
    <property type="match status" value="1"/>
</dbReference>
<dbReference type="Gene3D" id="1.10.2020.10">
    <property type="entry name" value="uronate isomerase, domain 2, chain A"/>
    <property type="match status" value="1"/>
</dbReference>
<dbReference type="HAMAP" id="MF_00675">
    <property type="entry name" value="UxaC"/>
    <property type="match status" value="1"/>
</dbReference>
<dbReference type="InterPro" id="IPR032466">
    <property type="entry name" value="Metal_Hydrolase"/>
</dbReference>
<dbReference type="InterPro" id="IPR003766">
    <property type="entry name" value="Uronate_isomerase"/>
</dbReference>
<dbReference type="NCBIfam" id="NF002794">
    <property type="entry name" value="PRK02925.1"/>
    <property type="match status" value="1"/>
</dbReference>
<dbReference type="PANTHER" id="PTHR30068">
    <property type="entry name" value="URONATE ISOMERASE"/>
    <property type="match status" value="1"/>
</dbReference>
<dbReference type="PANTHER" id="PTHR30068:SF4">
    <property type="entry name" value="URONATE ISOMERASE"/>
    <property type="match status" value="1"/>
</dbReference>
<dbReference type="Pfam" id="PF02614">
    <property type="entry name" value="UxaC"/>
    <property type="match status" value="1"/>
</dbReference>
<dbReference type="SUPFAM" id="SSF51556">
    <property type="entry name" value="Metallo-dependent hydrolases"/>
    <property type="match status" value="1"/>
</dbReference>
<comment type="catalytic activity">
    <reaction evidence="1">
        <text>D-glucuronate = D-fructuronate</text>
        <dbReference type="Rhea" id="RHEA:13049"/>
        <dbReference type="ChEBI" id="CHEBI:58720"/>
        <dbReference type="ChEBI" id="CHEBI:59863"/>
        <dbReference type="EC" id="5.3.1.12"/>
    </reaction>
</comment>
<comment type="catalytic activity">
    <reaction evidence="1">
        <text>aldehydo-D-galacturonate = keto-D-tagaturonate</text>
        <dbReference type="Rhea" id="RHEA:27702"/>
        <dbReference type="ChEBI" id="CHEBI:12952"/>
        <dbReference type="ChEBI" id="CHEBI:17886"/>
        <dbReference type="EC" id="5.3.1.12"/>
    </reaction>
</comment>
<comment type="pathway">
    <text evidence="1">Carbohydrate metabolism; pentose and glucuronate interconversion.</text>
</comment>
<comment type="similarity">
    <text evidence="1">Belongs to the metallo-dependent hydrolases superfamily. Uronate isomerase family.</text>
</comment>
<sequence>MKNFMDEKFMLSTKVAEDLYNDFAKDMPIIDYHCHISPQEICENKSFKNITEVWLYGDHYKWRLMRSSGVDEKYITGDSSDYEKFLAYVKAIETAIGNPLYHWSHLELQRYFGVYEVISEKNAPVIWEKANKVLNDGLTVREIIKKSNVKAICTTDDPIDSLEYHLKLKEDTSFNVKVLPAFRPDKALGINKDGYTDWVSKLAKVSKKNINSYDMFLEALNDRIEFFHSVGGRVSDHALDYVPYLEASKEEVNTIFAKALKGEKVSFEEETKFRTFTMKFLGKKYASLGWAMELHMNAKRDNNTRMYNKLGPDTGFDSVNDNGVAGPLSRFLDSLEKEGSLPKTIIYSLNPNDNFVIGTLLGCFQGTEAFGKIQFGAAWWFNDHRDGMVEQMETLANLGAFSTFIGMLTDSRSFLSYTRHEYFRRILCDLIGKWVENGEVPNDMELLGRITKNICFNNANNYFEMGL</sequence>
<feature type="chain" id="PRO_0000172767" description="Uronate isomerase">
    <location>
        <begin position="1"/>
        <end position="467"/>
    </location>
</feature>
<accession>Q97L70</accession>
<organism>
    <name type="scientific">Clostridium acetobutylicum (strain ATCC 824 / DSM 792 / JCM 1419 / IAM 19013 / LMG 5710 / NBRC 13948 / NRRL B-527 / VKM B-1787 / 2291 / W)</name>
    <dbReference type="NCBI Taxonomy" id="272562"/>
    <lineage>
        <taxon>Bacteria</taxon>
        <taxon>Bacillati</taxon>
        <taxon>Bacillota</taxon>
        <taxon>Clostridia</taxon>
        <taxon>Eubacteriales</taxon>
        <taxon>Clostridiaceae</taxon>
        <taxon>Clostridium</taxon>
    </lineage>
</organism>
<name>UXAC_CLOAB</name>
<evidence type="ECO:0000255" key="1">
    <source>
        <dbReference type="HAMAP-Rule" id="MF_00675"/>
    </source>
</evidence>
<proteinExistence type="inferred from homology"/>
<gene>
    <name evidence="1" type="primary">uxaC</name>
    <name type="ordered locus">CA_C0692</name>
</gene>
<keyword id="KW-0413">Isomerase</keyword>
<keyword id="KW-1185">Reference proteome</keyword>
<protein>
    <recommendedName>
        <fullName evidence="1">Uronate isomerase</fullName>
        <ecNumber evidence="1">5.3.1.12</ecNumber>
    </recommendedName>
    <alternativeName>
        <fullName evidence="1">Glucuronate isomerase</fullName>
    </alternativeName>
    <alternativeName>
        <fullName evidence="1">Uronic isomerase</fullName>
    </alternativeName>
</protein>
<reference key="1">
    <citation type="journal article" date="2001" name="J. Bacteriol.">
        <title>Genome sequence and comparative analysis of the solvent-producing bacterium Clostridium acetobutylicum.</title>
        <authorList>
            <person name="Noelling J."/>
            <person name="Breton G."/>
            <person name="Omelchenko M.V."/>
            <person name="Makarova K.S."/>
            <person name="Zeng Q."/>
            <person name="Gibson R."/>
            <person name="Lee H.M."/>
            <person name="Dubois J."/>
            <person name="Qiu D."/>
            <person name="Hitti J."/>
            <person name="Wolf Y.I."/>
            <person name="Tatusov R.L."/>
            <person name="Sabathe F."/>
            <person name="Doucette-Stamm L.A."/>
            <person name="Soucaille P."/>
            <person name="Daly M.J."/>
            <person name="Bennett G.N."/>
            <person name="Koonin E.V."/>
            <person name="Smith D.R."/>
        </authorList>
    </citation>
    <scope>NUCLEOTIDE SEQUENCE [LARGE SCALE GENOMIC DNA]</scope>
    <source>
        <strain>ATCC 824 / DSM 792 / JCM 1419 / IAM 19013 / LMG 5710 / NBRC 13948 / NRRL B-527 / VKM B-1787 / 2291 / W</strain>
    </source>
</reference>